<sequence length="174" mass="20351">MARKNQKAPWEPEEEIIWVSKSEMKRDMEELQKLGEELVGLKPAVLDKFPLSEDLREAVADAQRFKNEARRRQLQRIGKLMRYEDPEPIQAALDKIRNKHSQATAALHKLEALRDRVVEEGDKAIDDVMELYPEADRQRLRQLARQAAKEKKAGKPAKSYREIFQILKAFEEEM</sequence>
<evidence type="ECO:0000255" key="1">
    <source>
        <dbReference type="HAMAP-Rule" id="MF_00765"/>
    </source>
</evidence>
<accession>A7MSA8</accession>
<organism>
    <name type="scientific">Vibrio campbellii (strain ATCC BAA-1116)</name>
    <dbReference type="NCBI Taxonomy" id="2902295"/>
    <lineage>
        <taxon>Bacteria</taxon>
        <taxon>Pseudomonadati</taxon>
        <taxon>Pseudomonadota</taxon>
        <taxon>Gammaproteobacteria</taxon>
        <taxon>Vibrionales</taxon>
        <taxon>Vibrionaceae</taxon>
        <taxon>Vibrio</taxon>
    </lineage>
</organism>
<comment type="function">
    <text evidence="1">Member of a network of 50S ribosomal subunit biogenesis factors which assembles along the 30S-50S interface, preventing incorrect 23S rRNA structures from forming. Promotes peptidyl transferase center (PTC) maturation.</text>
</comment>
<comment type="subcellular location">
    <subcellularLocation>
        <location evidence="1">Cytoplasm</location>
    </subcellularLocation>
    <text evidence="1">Associates with late stage pre-50S ribosomal subunits.</text>
</comment>
<comment type="similarity">
    <text evidence="1">Belongs to the DarP family.</text>
</comment>
<dbReference type="EMBL" id="CP000789">
    <property type="protein sequence ID" value="ABU72586.1"/>
    <property type="molecule type" value="Genomic_DNA"/>
</dbReference>
<dbReference type="SMR" id="A7MSA8"/>
<dbReference type="KEGG" id="vha:VIBHAR_03672"/>
<dbReference type="PATRIC" id="fig|338187.25.peg.2563"/>
<dbReference type="Proteomes" id="UP000008152">
    <property type="component" value="Chromosome I"/>
</dbReference>
<dbReference type="GO" id="GO:0005829">
    <property type="term" value="C:cytosol"/>
    <property type="evidence" value="ECO:0007669"/>
    <property type="project" value="TreeGrafter"/>
</dbReference>
<dbReference type="GO" id="GO:0043022">
    <property type="term" value="F:ribosome binding"/>
    <property type="evidence" value="ECO:0007669"/>
    <property type="project" value="UniProtKB-UniRule"/>
</dbReference>
<dbReference type="GO" id="GO:0019843">
    <property type="term" value="F:rRNA binding"/>
    <property type="evidence" value="ECO:0007669"/>
    <property type="project" value="UniProtKB-UniRule"/>
</dbReference>
<dbReference type="GO" id="GO:1902626">
    <property type="term" value="P:assembly of large subunit precursor of preribosome"/>
    <property type="evidence" value="ECO:0007669"/>
    <property type="project" value="UniProtKB-UniRule"/>
</dbReference>
<dbReference type="CDD" id="cd16331">
    <property type="entry name" value="YjgA-like"/>
    <property type="match status" value="1"/>
</dbReference>
<dbReference type="FunFam" id="1.10.60.30:FF:000002">
    <property type="entry name" value="UPF0307 protein YjgA"/>
    <property type="match status" value="1"/>
</dbReference>
<dbReference type="Gene3D" id="1.10.60.30">
    <property type="entry name" value="PSPTO4464-like domains"/>
    <property type="match status" value="2"/>
</dbReference>
<dbReference type="HAMAP" id="MF_00765">
    <property type="entry name" value="DarP"/>
    <property type="match status" value="1"/>
</dbReference>
<dbReference type="InterPro" id="IPR006839">
    <property type="entry name" value="DarP"/>
</dbReference>
<dbReference type="InterPro" id="IPR023153">
    <property type="entry name" value="DarP_sf"/>
</dbReference>
<dbReference type="NCBIfam" id="NF003593">
    <property type="entry name" value="PRK05255.1-1"/>
    <property type="match status" value="1"/>
</dbReference>
<dbReference type="PANTHER" id="PTHR38101">
    <property type="entry name" value="UPF0307 PROTEIN YJGA"/>
    <property type="match status" value="1"/>
</dbReference>
<dbReference type="PANTHER" id="PTHR38101:SF1">
    <property type="entry name" value="UPF0307 PROTEIN YJGA"/>
    <property type="match status" value="1"/>
</dbReference>
<dbReference type="Pfam" id="PF04751">
    <property type="entry name" value="DarP"/>
    <property type="match status" value="1"/>
</dbReference>
<dbReference type="PIRSF" id="PIRSF016183">
    <property type="entry name" value="UCP016183"/>
    <property type="match status" value="1"/>
</dbReference>
<dbReference type="SUPFAM" id="SSF158710">
    <property type="entry name" value="PSPTO4464-like"/>
    <property type="match status" value="1"/>
</dbReference>
<gene>
    <name evidence="1" type="primary">darP</name>
    <name type="ordered locus">VIBHAR_03672</name>
</gene>
<reference key="1">
    <citation type="submission" date="2007-08" db="EMBL/GenBank/DDBJ databases">
        <authorList>
            <consortium name="The Vibrio harveyi Genome Sequencing Project"/>
            <person name="Bassler B."/>
            <person name="Clifton S.W."/>
            <person name="Fulton L."/>
            <person name="Delehaunty K."/>
            <person name="Fronick C."/>
            <person name="Harrison M."/>
            <person name="Markivic C."/>
            <person name="Fulton R."/>
            <person name="Tin-Wollam A.-M."/>
            <person name="Shah N."/>
            <person name="Pepin K."/>
            <person name="Nash W."/>
            <person name="Thiruvilangam P."/>
            <person name="Bhonagiri V."/>
            <person name="Waters C."/>
            <person name="Tu K.C."/>
            <person name="Irgon J."/>
            <person name="Wilson R.K."/>
        </authorList>
    </citation>
    <scope>NUCLEOTIDE SEQUENCE [LARGE SCALE GENOMIC DNA]</scope>
    <source>
        <strain>ATCC BAA-1116 / BB120</strain>
    </source>
</reference>
<protein>
    <recommendedName>
        <fullName evidence="1">Dual-action ribosomal maturation protein DarP</fullName>
    </recommendedName>
    <alternativeName>
        <fullName evidence="1">Large ribosomal subunit assembly factor DarP</fullName>
    </alternativeName>
</protein>
<feature type="chain" id="PRO_1000046807" description="Dual-action ribosomal maturation protein DarP">
    <location>
        <begin position="1"/>
        <end position="174"/>
    </location>
</feature>
<name>DARP_VIBC1</name>
<proteinExistence type="inferred from homology"/>
<keyword id="KW-0963">Cytoplasm</keyword>
<keyword id="KW-0690">Ribosome biogenesis</keyword>
<keyword id="KW-0694">RNA-binding</keyword>
<keyword id="KW-0699">rRNA-binding</keyword>